<name>MURG_RHOOB</name>
<organism>
    <name type="scientific">Rhodococcus opacus (strain B4)</name>
    <dbReference type="NCBI Taxonomy" id="632772"/>
    <lineage>
        <taxon>Bacteria</taxon>
        <taxon>Bacillati</taxon>
        <taxon>Actinomycetota</taxon>
        <taxon>Actinomycetes</taxon>
        <taxon>Mycobacteriales</taxon>
        <taxon>Nocardiaceae</taxon>
        <taxon>Rhodococcus</taxon>
    </lineage>
</organism>
<evidence type="ECO:0000255" key="1">
    <source>
        <dbReference type="HAMAP-Rule" id="MF_00033"/>
    </source>
</evidence>
<sequence>MNGDKSTLSVIVAGGGTAGHIEPALAVADAIKAIDDTAVVTALGTARGLETTLVPERGYPLELVPPVPLPRKPTLDLLRLPGRVRASVRRTREVLDATGADVVVGFGGYVALPAYLAAGPGLLRRRRRIPIVVHEANASAGIANKIGARRAARVLAAVAGSGVSARGRSDAEILGIPVRASITGLDRSALRAEARAHFGLPADGPVLLVFGGSQGARSLNEAVSGAAESLAAAGVAVLHAHGPKNTLDVPAAPGGPPYVAVPYLSRMDLAYSAADAVICRSGAMTVAEVSAVGLPAVYVPLPHGNGEQELNARPVVAAGGGMIVADGDLSAGFVAETVIPLLRDPAQLEDMGRRAAGAGHRSAAAEVARIVIDVAAQTRGTR</sequence>
<reference key="1">
    <citation type="submission" date="2009-03" db="EMBL/GenBank/DDBJ databases">
        <title>Comparison of the complete genome sequences of Rhodococcus erythropolis PR4 and Rhodococcus opacus B4.</title>
        <authorList>
            <person name="Takarada H."/>
            <person name="Sekine M."/>
            <person name="Hosoyama A."/>
            <person name="Yamada R."/>
            <person name="Fujisawa T."/>
            <person name="Omata S."/>
            <person name="Shimizu A."/>
            <person name="Tsukatani N."/>
            <person name="Tanikawa S."/>
            <person name="Fujita N."/>
            <person name="Harayama S."/>
        </authorList>
    </citation>
    <scope>NUCLEOTIDE SEQUENCE [LARGE SCALE GENOMIC DNA]</scope>
    <source>
        <strain>B4</strain>
    </source>
</reference>
<keyword id="KW-0131">Cell cycle</keyword>
<keyword id="KW-0132">Cell division</keyword>
<keyword id="KW-1003">Cell membrane</keyword>
<keyword id="KW-0133">Cell shape</keyword>
<keyword id="KW-0961">Cell wall biogenesis/degradation</keyword>
<keyword id="KW-0328">Glycosyltransferase</keyword>
<keyword id="KW-0472">Membrane</keyword>
<keyword id="KW-0573">Peptidoglycan synthesis</keyword>
<keyword id="KW-0808">Transferase</keyword>
<proteinExistence type="inferred from homology"/>
<gene>
    <name evidence="1" type="primary">murG</name>
    <name type="ordered locus">ROP_08160</name>
</gene>
<protein>
    <recommendedName>
        <fullName evidence="1">UDP-N-acetylglucosamine--N-acetylmuramyl-(pentapeptide) pyrophosphoryl-undecaprenol N-acetylglucosamine transferase</fullName>
        <ecNumber evidence="1">2.4.1.227</ecNumber>
    </recommendedName>
    <alternativeName>
        <fullName evidence="1">Undecaprenyl-PP-MurNAc-pentapeptide-UDPGlcNAc GlcNAc transferase</fullName>
    </alternativeName>
</protein>
<accession>C1AU55</accession>
<dbReference type="EC" id="2.4.1.227" evidence="1"/>
<dbReference type="EMBL" id="AP011115">
    <property type="protein sequence ID" value="BAH49063.1"/>
    <property type="molecule type" value="Genomic_DNA"/>
</dbReference>
<dbReference type="RefSeq" id="WP_012688058.1">
    <property type="nucleotide sequence ID" value="NC_012522.1"/>
</dbReference>
<dbReference type="SMR" id="C1AU55"/>
<dbReference type="STRING" id="632772.ROP_08160"/>
<dbReference type="CAZy" id="GT28">
    <property type="family name" value="Glycosyltransferase Family 28"/>
</dbReference>
<dbReference type="KEGG" id="rop:ROP_08160"/>
<dbReference type="PATRIC" id="fig|632772.20.peg.879"/>
<dbReference type="HOGENOM" id="CLU_037404_1_0_11"/>
<dbReference type="OrthoDB" id="9808936at2"/>
<dbReference type="UniPathway" id="UPA00219"/>
<dbReference type="Proteomes" id="UP000002212">
    <property type="component" value="Chromosome"/>
</dbReference>
<dbReference type="GO" id="GO:0005886">
    <property type="term" value="C:plasma membrane"/>
    <property type="evidence" value="ECO:0007669"/>
    <property type="project" value="UniProtKB-SubCell"/>
</dbReference>
<dbReference type="GO" id="GO:0051991">
    <property type="term" value="F:UDP-N-acetyl-D-glucosamine:N-acetylmuramoyl-L-alanyl-D-glutamyl-meso-2,6-diaminopimelyl-D-alanyl-D-alanine-diphosphoundecaprenol 4-beta-N-acetylglucosaminlytransferase activity"/>
    <property type="evidence" value="ECO:0007669"/>
    <property type="project" value="RHEA"/>
</dbReference>
<dbReference type="GO" id="GO:0050511">
    <property type="term" value="F:undecaprenyldiphospho-muramoylpentapeptide beta-N-acetylglucosaminyltransferase activity"/>
    <property type="evidence" value="ECO:0007669"/>
    <property type="project" value="UniProtKB-UniRule"/>
</dbReference>
<dbReference type="GO" id="GO:0005975">
    <property type="term" value="P:carbohydrate metabolic process"/>
    <property type="evidence" value="ECO:0007669"/>
    <property type="project" value="InterPro"/>
</dbReference>
<dbReference type="GO" id="GO:0051301">
    <property type="term" value="P:cell division"/>
    <property type="evidence" value="ECO:0007669"/>
    <property type="project" value="UniProtKB-KW"/>
</dbReference>
<dbReference type="GO" id="GO:0071555">
    <property type="term" value="P:cell wall organization"/>
    <property type="evidence" value="ECO:0007669"/>
    <property type="project" value="UniProtKB-KW"/>
</dbReference>
<dbReference type="GO" id="GO:0030259">
    <property type="term" value="P:lipid glycosylation"/>
    <property type="evidence" value="ECO:0007669"/>
    <property type="project" value="UniProtKB-UniRule"/>
</dbReference>
<dbReference type="GO" id="GO:0009252">
    <property type="term" value="P:peptidoglycan biosynthetic process"/>
    <property type="evidence" value="ECO:0007669"/>
    <property type="project" value="UniProtKB-UniRule"/>
</dbReference>
<dbReference type="GO" id="GO:0008360">
    <property type="term" value="P:regulation of cell shape"/>
    <property type="evidence" value="ECO:0007669"/>
    <property type="project" value="UniProtKB-KW"/>
</dbReference>
<dbReference type="CDD" id="cd03785">
    <property type="entry name" value="GT28_MurG"/>
    <property type="match status" value="1"/>
</dbReference>
<dbReference type="Gene3D" id="3.40.50.2000">
    <property type="entry name" value="Glycogen Phosphorylase B"/>
    <property type="match status" value="2"/>
</dbReference>
<dbReference type="HAMAP" id="MF_00033">
    <property type="entry name" value="MurG"/>
    <property type="match status" value="1"/>
</dbReference>
<dbReference type="InterPro" id="IPR006009">
    <property type="entry name" value="GlcNAc_MurG"/>
</dbReference>
<dbReference type="InterPro" id="IPR007235">
    <property type="entry name" value="Glyco_trans_28_C"/>
</dbReference>
<dbReference type="InterPro" id="IPR004276">
    <property type="entry name" value="GlycoTrans_28_N"/>
</dbReference>
<dbReference type="NCBIfam" id="TIGR01133">
    <property type="entry name" value="murG"/>
    <property type="match status" value="1"/>
</dbReference>
<dbReference type="PANTHER" id="PTHR21015:SF22">
    <property type="entry name" value="GLYCOSYLTRANSFERASE"/>
    <property type="match status" value="1"/>
</dbReference>
<dbReference type="PANTHER" id="PTHR21015">
    <property type="entry name" value="UDP-N-ACETYLGLUCOSAMINE--N-ACETYLMURAMYL-(PENTAPEPTIDE) PYROPHOSPHORYL-UNDECAPRENOL N-ACETYLGLUCOSAMINE TRANSFERASE 1"/>
    <property type="match status" value="1"/>
</dbReference>
<dbReference type="Pfam" id="PF04101">
    <property type="entry name" value="Glyco_tran_28_C"/>
    <property type="match status" value="1"/>
</dbReference>
<dbReference type="Pfam" id="PF03033">
    <property type="entry name" value="Glyco_transf_28"/>
    <property type="match status" value="1"/>
</dbReference>
<dbReference type="SUPFAM" id="SSF53756">
    <property type="entry name" value="UDP-Glycosyltransferase/glycogen phosphorylase"/>
    <property type="match status" value="1"/>
</dbReference>
<feature type="chain" id="PRO_1000192141" description="UDP-N-acetylglucosamine--N-acetylmuramyl-(pentapeptide) pyrophosphoryl-undecaprenol N-acetylglucosamine transferase">
    <location>
        <begin position="1"/>
        <end position="382"/>
    </location>
</feature>
<feature type="binding site" evidence="1">
    <location>
        <begin position="17"/>
        <end position="19"/>
    </location>
    <ligand>
        <name>UDP-N-acetyl-alpha-D-glucosamine</name>
        <dbReference type="ChEBI" id="CHEBI:57705"/>
    </ligand>
</feature>
<feature type="binding site" evidence="1">
    <location>
        <position position="137"/>
    </location>
    <ligand>
        <name>UDP-N-acetyl-alpha-D-glucosamine</name>
        <dbReference type="ChEBI" id="CHEBI:57705"/>
    </ligand>
</feature>
<feature type="binding site" evidence="1">
    <location>
        <position position="179"/>
    </location>
    <ligand>
        <name>UDP-N-acetyl-alpha-D-glucosamine</name>
        <dbReference type="ChEBI" id="CHEBI:57705"/>
    </ligand>
</feature>
<feature type="binding site" evidence="1">
    <location>
        <position position="213"/>
    </location>
    <ligand>
        <name>UDP-N-acetyl-alpha-D-glucosamine</name>
        <dbReference type="ChEBI" id="CHEBI:57705"/>
    </ligand>
</feature>
<feature type="binding site" evidence="1">
    <location>
        <position position="308"/>
    </location>
    <ligand>
        <name>UDP-N-acetyl-alpha-D-glucosamine</name>
        <dbReference type="ChEBI" id="CHEBI:57705"/>
    </ligand>
</feature>
<comment type="function">
    <text evidence="1">Cell wall formation. Catalyzes the transfer of a GlcNAc subunit on undecaprenyl-pyrophosphoryl-MurNAc-pentapeptide (lipid intermediate I) to form undecaprenyl-pyrophosphoryl-MurNAc-(pentapeptide)GlcNAc (lipid intermediate II).</text>
</comment>
<comment type="catalytic activity">
    <reaction evidence="1">
        <text>di-trans,octa-cis-undecaprenyl diphospho-N-acetyl-alpha-D-muramoyl-L-alanyl-D-glutamyl-meso-2,6-diaminopimeloyl-D-alanyl-D-alanine + UDP-N-acetyl-alpha-D-glucosamine = di-trans,octa-cis-undecaprenyl diphospho-[N-acetyl-alpha-D-glucosaminyl-(1-&gt;4)]-N-acetyl-alpha-D-muramoyl-L-alanyl-D-glutamyl-meso-2,6-diaminopimeloyl-D-alanyl-D-alanine + UDP + H(+)</text>
        <dbReference type="Rhea" id="RHEA:31227"/>
        <dbReference type="ChEBI" id="CHEBI:15378"/>
        <dbReference type="ChEBI" id="CHEBI:57705"/>
        <dbReference type="ChEBI" id="CHEBI:58223"/>
        <dbReference type="ChEBI" id="CHEBI:61387"/>
        <dbReference type="ChEBI" id="CHEBI:61388"/>
        <dbReference type="EC" id="2.4.1.227"/>
    </reaction>
</comment>
<comment type="pathway">
    <text evidence="1">Cell wall biogenesis; peptidoglycan biosynthesis.</text>
</comment>
<comment type="subcellular location">
    <subcellularLocation>
        <location evidence="1">Cell membrane</location>
        <topology evidence="1">Peripheral membrane protein</topology>
        <orientation evidence="1">Cytoplasmic side</orientation>
    </subcellularLocation>
</comment>
<comment type="similarity">
    <text evidence="1">Belongs to the glycosyltransferase 28 family. MurG subfamily.</text>
</comment>